<accession>A8ARM1</accession>
<sequence length="159" mass="17986">MQKRAIYPGTFDPITNGHIDIVTRATQMFDHVILAIAASPSKKPMFTLEERVALAQQATAHLGNVEVMGFSDLMANFARIQQANILIRGLRAVADFEYEMQLAHMNRHLMPQLESVFLMPSKEWSFISSSLVKEVARHQGDVTHFLPENVHQALMDKLK</sequence>
<dbReference type="EC" id="2.7.7.3" evidence="1"/>
<dbReference type="EMBL" id="CP000822">
    <property type="protein sequence ID" value="ABV16134.1"/>
    <property type="molecule type" value="Genomic_DNA"/>
</dbReference>
<dbReference type="RefSeq" id="WP_012135771.1">
    <property type="nucleotide sequence ID" value="NC_009792.1"/>
</dbReference>
<dbReference type="SMR" id="A8ARM1"/>
<dbReference type="STRING" id="290338.CKO_05091"/>
<dbReference type="GeneID" id="45138544"/>
<dbReference type="KEGG" id="cko:CKO_05091"/>
<dbReference type="HOGENOM" id="CLU_100149_0_1_6"/>
<dbReference type="OrthoDB" id="9806661at2"/>
<dbReference type="UniPathway" id="UPA00241">
    <property type="reaction ID" value="UER00355"/>
</dbReference>
<dbReference type="Proteomes" id="UP000008148">
    <property type="component" value="Chromosome"/>
</dbReference>
<dbReference type="GO" id="GO:0005737">
    <property type="term" value="C:cytoplasm"/>
    <property type="evidence" value="ECO:0007669"/>
    <property type="project" value="UniProtKB-SubCell"/>
</dbReference>
<dbReference type="GO" id="GO:0005524">
    <property type="term" value="F:ATP binding"/>
    <property type="evidence" value="ECO:0007669"/>
    <property type="project" value="UniProtKB-KW"/>
</dbReference>
<dbReference type="GO" id="GO:0004595">
    <property type="term" value="F:pantetheine-phosphate adenylyltransferase activity"/>
    <property type="evidence" value="ECO:0007669"/>
    <property type="project" value="UniProtKB-UniRule"/>
</dbReference>
<dbReference type="GO" id="GO:0015937">
    <property type="term" value="P:coenzyme A biosynthetic process"/>
    <property type="evidence" value="ECO:0007669"/>
    <property type="project" value="UniProtKB-UniRule"/>
</dbReference>
<dbReference type="CDD" id="cd02163">
    <property type="entry name" value="PPAT"/>
    <property type="match status" value="1"/>
</dbReference>
<dbReference type="FunFam" id="3.40.50.620:FF:000012">
    <property type="entry name" value="Phosphopantetheine adenylyltransferase"/>
    <property type="match status" value="1"/>
</dbReference>
<dbReference type="Gene3D" id="3.40.50.620">
    <property type="entry name" value="HUPs"/>
    <property type="match status" value="1"/>
</dbReference>
<dbReference type="HAMAP" id="MF_00151">
    <property type="entry name" value="PPAT_bact"/>
    <property type="match status" value="1"/>
</dbReference>
<dbReference type="InterPro" id="IPR004821">
    <property type="entry name" value="Cyt_trans-like"/>
</dbReference>
<dbReference type="InterPro" id="IPR001980">
    <property type="entry name" value="PPAT"/>
</dbReference>
<dbReference type="InterPro" id="IPR014729">
    <property type="entry name" value="Rossmann-like_a/b/a_fold"/>
</dbReference>
<dbReference type="NCBIfam" id="TIGR01510">
    <property type="entry name" value="coaD_prev_kdtB"/>
    <property type="match status" value="1"/>
</dbReference>
<dbReference type="NCBIfam" id="TIGR00125">
    <property type="entry name" value="cyt_tran_rel"/>
    <property type="match status" value="1"/>
</dbReference>
<dbReference type="PANTHER" id="PTHR21342">
    <property type="entry name" value="PHOSPHOPANTETHEINE ADENYLYLTRANSFERASE"/>
    <property type="match status" value="1"/>
</dbReference>
<dbReference type="PANTHER" id="PTHR21342:SF1">
    <property type="entry name" value="PHOSPHOPANTETHEINE ADENYLYLTRANSFERASE"/>
    <property type="match status" value="1"/>
</dbReference>
<dbReference type="Pfam" id="PF01467">
    <property type="entry name" value="CTP_transf_like"/>
    <property type="match status" value="1"/>
</dbReference>
<dbReference type="PRINTS" id="PR01020">
    <property type="entry name" value="LPSBIOSNTHSS"/>
</dbReference>
<dbReference type="SUPFAM" id="SSF52374">
    <property type="entry name" value="Nucleotidylyl transferase"/>
    <property type="match status" value="1"/>
</dbReference>
<protein>
    <recommendedName>
        <fullName evidence="1">Phosphopantetheine adenylyltransferase</fullName>
        <ecNumber evidence="1">2.7.7.3</ecNumber>
    </recommendedName>
    <alternativeName>
        <fullName evidence="1">Dephospho-CoA pyrophosphorylase</fullName>
    </alternativeName>
    <alternativeName>
        <fullName evidence="1">Pantetheine-phosphate adenylyltransferase</fullName>
        <shortName evidence="1">PPAT</shortName>
    </alternativeName>
</protein>
<feature type="chain" id="PRO_1000011123" description="Phosphopantetheine adenylyltransferase">
    <location>
        <begin position="1"/>
        <end position="159"/>
    </location>
</feature>
<feature type="binding site" evidence="1">
    <location>
        <begin position="10"/>
        <end position="11"/>
    </location>
    <ligand>
        <name>ATP</name>
        <dbReference type="ChEBI" id="CHEBI:30616"/>
    </ligand>
</feature>
<feature type="binding site" evidence="1">
    <location>
        <position position="10"/>
    </location>
    <ligand>
        <name>substrate</name>
    </ligand>
</feature>
<feature type="binding site" evidence="1">
    <location>
        <position position="18"/>
    </location>
    <ligand>
        <name>ATP</name>
        <dbReference type="ChEBI" id="CHEBI:30616"/>
    </ligand>
</feature>
<feature type="binding site" evidence="1">
    <location>
        <position position="42"/>
    </location>
    <ligand>
        <name>substrate</name>
    </ligand>
</feature>
<feature type="binding site" evidence="1">
    <location>
        <position position="74"/>
    </location>
    <ligand>
        <name>substrate</name>
    </ligand>
</feature>
<feature type="binding site" evidence="1">
    <location>
        <position position="88"/>
    </location>
    <ligand>
        <name>substrate</name>
    </ligand>
</feature>
<feature type="binding site" evidence="1">
    <location>
        <begin position="89"/>
        <end position="91"/>
    </location>
    <ligand>
        <name>ATP</name>
        <dbReference type="ChEBI" id="CHEBI:30616"/>
    </ligand>
</feature>
<feature type="binding site" evidence="1">
    <location>
        <position position="99"/>
    </location>
    <ligand>
        <name>ATP</name>
        <dbReference type="ChEBI" id="CHEBI:30616"/>
    </ligand>
</feature>
<feature type="binding site" evidence="1">
    <location>
        <begin position="124"/>
        <end position="130"/>
    </location>
    <ligand>
        <name>ATP</name>
        <dbReference type="ChEBI" id="CHEBI:30616"/>
    </ligand>
</feature>
<feature type="site" description="Transition state stabilizer" evidence="1">
    <location>
        <position position="18"/>
    </location>
</feature>
<name>COAD_CITK8</name>
<evidence type="ECO:0000255" key="1">
    <source>
        <dbReference type="HAMAP-Rule" id="MF_00151"/>
    </source>
</evidence>
<gene>
    <name evidence="1" type="primary">coaD</name>
    <name type="ordered locus">CKO_05091</name>
</gene>
<proteinExistence type="inferred from homology"/>
<comment type="function">
    <text evidence="1">Reversibly transfers an adenylyl group from ATP to 4'-phosphopantetheine, yielding dephospho-CoA (dPCoA) and pyrophosphate.</text>
</comment>
<comment type="catalytic activity">
    <reaction evidence="1">
        <text>(R)-4'-phosphopantetheine + ATP + H(+) = 3'-dephospho-CoA + diphosphate</text>
        <dbReference type="Rhea" id="RHEA:19801"/>
        <dbReference type="ChEBI" id="CHEBI:15378"/>
        <dbReference type="ChEBI" id="CHEBI:30616"/>
        <dbReference type="ChEBI" id="CHEBI:33019"/>
        <dbReference type="ChEBI" id="CHEBI:57328"/>
        <dbReference type="ChEBI" id="CHEBI:61723"/>
        <dbReference type="EC" id="2.7.7.3"/>
    </reaction>
</comment>
<comment type="cofactor">
    <cofactor evidence="1">
        <name>Mg(2+)</name>
        <dbReference type="ChEBI" id="CHEBI:18420"/>
    </cofactor>
</comment>
<comment type="pathway">
    <text evidence="1">Cofactor biosynthesis; coenzyme A biosynthesis; CoA from (R)-pantothenate: step 4/5.</text>
</comment>
<comment type="subunit">
    <text evidence="1">Homohexamer.</text>
</comment>
<comment type="subcellular location">
    <subcellularLocation>
        <location evidence="1">Cytoplasm</location>
    </subcellularLocation>
</comment>
<comment type="similarity">
    <text evidence="1">Belongs to the bacterial CoaD family.</text>
</comment>
<reference key="1">
    <citation type="submission" date="2007-08" db="EMBL/GenBank/DDBJ databases">
        <authorList>
            <consortium name="The Citrobacter koseri Genome Sequencing Project"/>
            <person name="McClelland M."/>
            <person name="Sanderson E.K."/>
            <person name="Porwollik S."/>
            <person name="Spieth J."/>
            <person name="Clifton W.S."/>
            <person name="Latreille P."/>
            <person name="Courtney L."/>
            <person name="Wang C."/>
            <person name="Pepin K."/>
            <person name="Bhonagiri V."/>
            <person name="Nash W."/>
            <person name="Johnson M."/>
            <person name="Thiruvilangam P."/>
            <person name="Wilson R."/>
        </authorList>
    </citation>
    <scope>NUCLEOTIDE SEQUENCE [LARGE SCALE GENOMIC DNA]</scope>
    <source>
        <strain>ATCC BAA-895 / CDC 4225-83 / SGSC4696</strain>
    </source>
</reference>
<organism>
    <name type="scientific">Citrobacter koseri (strain ATCC BAA-895 / CDC 4225-83 / SGSC4696)</name>
    <dbReference type="NCBI Taxonomy" id="290338"/>
    <lineage>
        <taxon>Bacteria</taxon>
        <taxon>Pseudomonadati</taxon>
        <taxon>Pseudomonadota</taxon>
        <taxon>Gammaproteobacteria</taxon>
        <taxon>Enterobacterales</taxon>
        <taxon>Enterobacteriaceae</taxon>
        <taxon>Citrobacter</taxon>
    </lineage>
</organism>
<keyword id="KW-0067">ATP-binding</keyword>
<keyword id="KW-0173">Coenzyme A biosynthesis</keyword>
<keyword id="KW-0963">Cytoplasm</keyword>
<keyword id="KW-0460">Magnesium</keyword>
<keyword id="KW-0547">Nucleotide-binding</keyword>
<keyword id="KW-0548">Nucleotidyltransferase</keyword>
<keyword id="KW-1185">Reference proteome</keyword>
<keyword id="KW-0808">Transferase</keyword>